<evidence type="ECO:0000250" key="1">
    <source>
        <dbReference type="UniProtKB" id="Q9UKF6"/>
    </source>
</evidence>
<evidence type="ECO:0000255" key="2"/>
<evidence type="ECO:0000269" key="3">
    <source>
    </source>
</evidence>
<evidence type="ECO:0000269" key="4">
    <source>
    </source>
</evidence>
<evidence type="ECO:0000269" key="5">
    <source>
    </source>
</evidence>
<evidence type="ECO:0000269" key="6">
    <source>
    </source>
</evidence>
<evidence type="ECO:0000269" key="7">
    <source>
    </source>
</evidence>
<evidence type="ECO:0000269" key="8">
    <source>
    </source>
</evidence>
<evidence type="ECO:0000305" key="9"/>
<evidence type="ECO:0007744" key="10">
    <source>
    </source>
</evidence>
<feature type="initiator methionine" description="Removed" evidence="1">
    <location>
        <position position="1"/>
    </location>
</feature>
<feature type="chain" id="PRO_0000074401" description="Cleavage and polyadenylation specificity factor subunit 3">
    <location>
        <begin position="2"/>
        <end position="684"/>
    </location>
</feature>
<feature type="active site" description="Proton donor" evidence="2">
    <location>
        <position position="396"/>
    </location>
</feature>
<feature type="binding site" evidence="1">
    <location>
        <position position="71"/>
    </location>
    <ligand>
        <name>Zn(2+)</name>
        <dbReference type="ChEBI" id="CHEBI:29105"/>
        <label>1</label>
    </ligand>
</feature>
<feature type="binding site" evidence="1">
    <location>
        <position position="73"/>
    </location>
    <ligand>
        <name>Zn(2+)</name>
        <dbReference type="ChEBI" id="CHEBI:29105"/>
        <label>1</label>
    </ligand>
</feature>
<feature type="binding site" evidence="1">
    <location>
        <position position="75"/>
    </location>
    <ligand>
        <name>Zn(2+)</name>
        <dbReference type="ChEBI" id="CHEBI:29105"/>
        <label>2</label>
    </ligand>
</feature>
<feature type="binding site" evidence="1">
    <location>
        <position position="76"/>
    </location>
    <ligand>
        <name>Zn(2+)</name>
        <dbReference type="ChEBI" id="CHEBI:29105"/>
        <label>2</label>
    </ligand>
</feature>
<feature type="binding site" evidence="1">
    <location>
        <position position="158"/>
    </location>
    <ligand>
        <name>Zn(2+)</name>
        <dbReference type="ChEBI" id="CHEBI:29105"/>
        <label>1</label>
    </ligand>
</feature>
<feature type="binding site" evidence="1">
    <location>
        <position position="179"/>
    </location>
    <ligand>
        <name>Zn(2+)</name>
        <dbReference type="ChEBI" id="CHEBI:29105"/>
        <label>1</label>
    </ligand>
</feature>
<feature type="binding site" evidence="1">
    <location>
        <position position="179"/>
    </location>
    <ligand>
        <name>Zn(2+)</name>
        <dbReference type="ChEBI" id="CHEBI:29105"/>
        <label>2</label>
    </ligand>
</feature>
<feature type="binding site" evidence="1">
    <location>
        <position position="418"/>
    </location>
    <ligand>
        <name>Zn(2+)</name>
        <dbReference type="ChEBI" id="CHEBI:29105"/>
        <label>2</label>
    </ligand>
</feature>
<feature type="modified residue" description="N-acetylserine" evidence="1">
    <location>
        <position position="2"/>
    </location>
</feature>
<feature type="modified residue" description="Phosphoserine" evidence="10">
    <location>
        <position position="659"/>
    </location>
</feature>
<feature type="modified residue" description="Phosphothreonine" evidence="1">
    <location>
        <position position="681"/>
    </location>
</feature>
<feature type="cross-link" description="Glycyl lysine isopeptide (Lys-Gly) (interchain with G-Cter in SUMO)" evidence="1">
    <location>
        <position position="462"/>
    </location>
</feature>
<feature type="cross-link" description="Glycyl lysine isopeptide (Lys-Gly) (interchain with G-Cter in SUMO)" evidence="1">
    <location>
        <position position="465"/>
    </location>
</feature>
<feature type="cross-link" description="Glycyl lysine isopeptide (Lys-Gly) (interchain with G-Cter in SUMO)" evidence="1">
    <location>
        <position position="545"/>
    </location>
</feature>
<feature type="mutagenesis site" description="Abolishes cleavage of the 5' autoinhibitory fragment of the long primary miRNA transcript, pri-miR-17-92." evidence="7">
    <original>DH</original>
    <variation>KA</variation>
    <location>
        <begin position="75"/>
        <end position="76"/>
    </location>
</feature>
<feature type="sequence conflict" description="In Ref. 1; AAF19420." evidence="9" ref="1">
    <original>CN</original>
    <variation>WH</variation>
    <location>
        <begin position="223"/>
        <end position="224"/>
    </location>
</feature>
<feature type="sequence conflict" description="In Ref. 1; AAF19420." evidence="9" ref="1">
    <original>E</original>
    <variation>D</variation>
    <location>
        <position position="541"/>
    </location>
</feature>
<feature type="sequence conflict" description="In Ref. 1; AAF19420." evidence="9" ref="1">
    <original>VL</original>
    <variation>GS</variation>
    <location>
        <begin position="564"/>
        <end position="565"/>
    </location>
</feature>
<proteinExistence type="evidence at protein level"/>
<organism>
    <name type="scientific">Mus musculus</name>
    <name type="common">Mouse</name>
    <dbReference type="NCBI Taxonomy" id="10090"/>
    <lineage>
        <taxon>Eukaryota</taxon>
        <taxon>Metazoa</taxon>
        <taxon>Chordata</taxon>
        <taxon>Craniata</taxon>
        <taxon>Vertebrata</taxon>
        <taxon>Euteleostomi</taxon>
        <taxon>Mammalia</taxon>
        <taxon>Eutheria</taxon>
        <taxon>Euarchontoglires</taxon>
        <taxon>Glires</taxon>
        <taxon>Rodentia</taxon>
        <taxon>Myomorpha</taxon>
        <taxon>Muroidea</taxon>
        <taxon>Muridae</taxon>
        <taxon>Murinae</taxon>
        <taxon>Mus</taxon>
        <taxon>Mus</taxon>
    </lineage>
</organism>
<comment type="function">
    <text evidence="1 4 5 6 7 8">Component of the cleavage and polyadenylation specificity factor (CPSF) complex that plays a key role in pre-mRNA 3'-end formation, recognizing the AAUAAA signal sequence and interacting with poly(A) polymerase and other factors to bring about cleavage and poly(A) addition. Has endonuclease activity, and functions as an mRNA 3'-end-processing endonuclease. Also involved in the histone 3'-end pre-mRNA processing. U7 snRNP-dependent protein that induces both the 3' endoribonucleolytic cleavage of histone pre-mRNAs and acts as a 5' to 3' exonuclease for degrading the subsequent downstream cleavage product (DCP) of mature histone mRNAs. Cleavage occurs after the 5'-ACCCA-3' sequence in the histone pre-mRNA leaving a 3'hydroxyl group on the upstream fragment containing the stem loop (SL) and 5' phosphate on the downstream cleavage product (DCP) starting with CU nucleotides. The U7-dependent 5' to 3' exonuclease activity is processive and degrades the DCP RNA substrate even after complete removal of the U7-binding site. Binds to the downstream cleavage product (DCP) of histone pre-mRNAs and the cleaved DCP RNA substrate in a U7 snRNP dependent manner. Required for the selective processing of microRNAs (miRNAs) during embryonic stem cell differentiation via its interaction with ISY1 (PubMed:26255770, PubMed:29804889). Required for entering/progressing through S-phase of the cell cycle (By similarity). Required for the biogenesis of all miRNAs from the pri-miR-17-92 primary transcript except miR-92a (PubMed:26255770). Only required for the biogenesis of miR-290 and miR-96 from the pri-miR-290-295 and pri-miR-96-183 primary transcripts, respectively (PubMed:29804889).</text>
</comment>
<comment type="cofactor">
    <cofactor evidence="1">
        <name>Zn(2+)</name>
        <dbReference type="ChEBI" id="CHEBI:29105"/>
    </cofactor>
    <text evidence="1">Binds 2 Zn(2+) ions per subunit.</text>
</comment>
<comment type="subunit">
    <text evidence="1 3 7">Component of the cleavage and polyadenylation specificity factor (CPSF) complex, composed of CPSF1, CPSF2, CPSF3, CPSF4 and FIP1L1. Interacts with CPSF2, CSTF2 and SYMPK. Interacts with TUT1; the interaction is direct and mediates the recruitment of the CPSF complex on the 3'UTR of pre-mRNAs. Interacts with WDR33 (By similarity). Interacts with ZC3H3 (PubMed:16115198). Interacts with ISY1; this interaction is in an RNA independent manner (PubMed:26255770). Interacts with the microprocessor complex subunits DGCR8 and DROSHA; this interaction is in an RNA dependent manner (PubMed:26255770).</text>
</comment>
<comment type="subcellular location">
    <subcellularLocation>
        <location evidence="1">Nucleus</location>
    </subcellularLocation>
</comment>
<comment type="PTM">
    <text evidence="1">Sumoylated on Lys-462, Lys-465 and Lys-545, preferentially by SUMO3.</text>
</comment>
<comment type="similarity">
    <text evidence="9">Belongs to the metallo-beta-lactamase superfamily. RNA-metabolizing metallo-beta-lactamase-like family. CPSF3 subfamily.</text>
</comment>
<name>CPSF3_MOUSE</name>
<gene>
    <name type="primary">Cpsf3</name>
    <name type="synonym">Cpsf73</name>
</gene>
<accession>Q9QXK7</accession>
<accession>Q8CIM0</accession>
<keyword id="KW-0007">Acetylation</keyword>
<keyword id="KW-0255">Endonuclease</keyword>
<keyword id="KW-0378">Hydrolase</keyword>
<keyword id="KW-1017">Isopeptide bond</keyword>
<keyword id="KW-0479">Metal-binding</keyword>
<keyword id="KW-0507">mRNA processing</keyword>
<keyword id="KW-0540">Nuclease</keyword>
<keyword id="KW-0539">Nucleus</keyword>
<keyword id="KW-0597">Phosphoprotein</keyword>
<keyword id="KW-1185">Reference proteome</keyword>
<keyword id="KW-0687">Ribonucleoprotein</keyword>
<keyword id="KW-0694">RNA-binding</keyword>
<keyword id="KW-0832">Ubl conjugation</keyword>
<keyword id="KW-0862">Zinc</keyword>
<protein>
    <recommendedName>
        <fullName>Cleavage and polyadenylation specificity factor subunit 3</fullName>
        <ecNumber evidence="5">3.1.27.-</ecNumber>
    </recommendedName>
    <alternativeName>
        <fullName>Cleavage and polyadenylation specificity factor 73 kDa subunit</fullName>
        <shortName>CPSF 73 kDa subunit</shortName>
        <shortName>mRNA 3'-end-processing endonuclease CPSF-73</shortName>
    </alternativeName>
</protein>
<reference key="1">
    <citation type="submission" date="1999-11" db="EMBL/GenBank/DDBJ databases">
        <authorList>
            <person name="Wang H."/>
            <person name="Chen W."/>
            <person name="Yu S."/>
            <person name="Xie L."/>
        </authorList>
    </citation>
    <scope>NUCLEOTIDE SEQUENCE [MRNA]</scope>
    <source>
        <strain>BALB/cJ</strain>
    </source>
</reference>
<reference key="2">
    <citation type="journal article" date="2004" name="Genome Res.">
        <title>The status, quality, and expansion of the NIH full-length cDNA project: the Mammalian Gene Collection (MGC).</title>
        <authorList>
            <consortium name="The MGC Project Team"/>
        </authorList>
    </citation>
    <scope>NUCLEOTIDE SEQUENCE [LARGE SCALE MRNA]</scope>
    <source>
        <strain>FVB/N</strain>
        <tissue>Salivary gland</tissue>
    </source>
</reference>
<reference key="3">
    <citation type="journal article" date="2005" name="Cell">
        <title>The polyadenylation factor CPSF-73 is involved in histone-pre-mRNA processing.</title>
        <authorList>
            <person name="Dominski Z."/>
            <person name="Yang X.-C."/>
            <person name="Marzluff W.F."/>
        </authorList>
    </citation>
    <scope>FUNCTION</scope>
    <scope>RNA-BINDING</scope>
</reference>
<reference key="4">
    <citation type="journal article" date="2005" name="Genes Cells">
        <title>Smicl is a novel Smad interacting protein and cleavage and polyadenylation specificity factor associated protein.</title>
        <authorList>
            <person name="Collart C."/>
            <person name="Remacle J.E."/>
            <person name="Barabino S."/>
            <person name="van Grunsven L.A."/>
            <person name="Nelles L."/>
            <person name="Schellens A."/>
            <person name="Van de Putte T."/>
            <person name="Pype S."/>
            <person name="Huylebroeck D."/>
            <person name="Verschueren K."/>
        </authorList>
    </citation>
    <scope>INTERACTION WITH ZC3H3</scope>
</reference>
<reference key="5">
    <citation type="journal article" date="2009" name="Mol. Cell. Biol.">
        <title>Studies of the 5' exonuclease and endonuclease activities of CPSF-73 in histone pre-mRNA processing.</title>
        <authorList>
            <person name="Yang X.-C."/>
            <person name="Sullivan K.D."/>
            <person name="Marzluff W.F."/>
            <person name="Dominski Z."/>
        </authorList>
    </citation>
    <scope>FUNCTION</scope>
    <scope>RNA-BINDING</scope>
    <scope>CATALYTIC ACTIVITY</scope>
</reference>
<reference key="6">
    <citation type="journal article" date="2009" name="Mol. Cell. Biol.">
        <title>Three proteins of the U7-specific Sm ring function as the molecular ruler to determine the site of 3'-end processing in mammalian histone pre-mRNA.</title>
        <authorList>
            <person name="Yang X.-C."/>
            <person name="Torres M.P."/>
            <person name="Marzluff W.F."/>
            <person name="Dominski Z."/>
        </authorList>
    </citation>
    <scope>FUNCTION</scope>
    <scope>RNA-BINDING</scope>
</reference>
<reference key="7">
    <citation type="journal article" date="2010" name="Cell">
        <title>A tissue-specific atlas of mouse protein phosphorylation and expression.</title>
        <authorList>
            <person name="Huttlin E.L."/>
            <person name="Jedrychowski M.P."/>
            <person name="Elias J.E."/>
            <person name="Goswami T."/>
            <person name="Rad R."/>
            <person name="Beausoleil S.A."/>
            <person name="Villen J."/>
            <person name="Haas W."/>
            <person name="Sowa M.E."/>
            <person name="Gygi S.P."/>
        </authorList>
    </citation>
    <scope>PHOSPHORYLATION [LARGE SCALE ANALYSIS] AT SER-659</scope>
    <scope>IDENTIFICATION BY MASS SPECTROMETRY [LARGE SCALE ANALYSIS]</scope>
    <source>
        <tissue>Brown adipose tissue</tissue>
        <tissue>Liver</tissue>
        <tissue>Lung</tissue>
        <tissue>Spleen</tissue>
        <tissue>Testis</tissue>
    </source>
</reference>
<reference key="8">
    <citation type="journal article" date="2015" name="Cell">
        <title>A biogenesis step upstream of microprocessor controls miR-17~92 expression.</title>
        <authorList>
            <person name="Du P."/>
            <person name="Wang L."/>
            <person name="Sliz P."/>
            <person name="Gregory R.I."/>
        </authorList>
    </citation>
    <scope>FUNCTION</scope>
    <scope>INTERACTION WITH DGCR8; DROSHA AND ISY1</scope>
    <scope>MUTAGENESIS OF 75-ASP-HIS-76</scope>
</reference>
<reference key="9">
    <citation type="journal article" date="2018" name="Cell Stem Cell">
        <title>An intermediate pluripotent state controlled by microRNAs is required for the naive-to-primed stem cell transition.</title>
        <authorList>
            <person name="Du P."/>
            <person name="Pirouz M."/>
            <person name="Choi J."/>
            <person name="Huebner A.J."/>
            <person name="Clement K."/>
            <person name="Meissner A."/>
            <person name="Hochedlinger K."/>
            <person name="Gregory R.I."/>
        </authorList>
    </citation>
    <scope>FUNCTION</scope>
</reference>
<dbReference type="EC" id="3.1.27.-" evidence="5"/>
<dbReference type="EMBL" id="AF203969">
    <property type="protein sequence ID" value="AAF19420.1"/>
    <property type="molecule type" value="mRNA"/>
</dbReference>
<dbReference type="EMBL" id="BC023297">
    <property type="protein sequence ID" value="AAH23297.1"/>
    <property type="molecule type" value="mRNA"/>
</dbReference>
<dbReference type="CCDS" id="CCDS25834.1"/>
<dbReference type="RefSeq" id="NP_061283.2">
    <property type="nucleotide sequence ID" value="NM_018813.3"/>
</dbReference>
<dbReference type="SMR" id="Q9QXK7"/>
<dbReference type="BioGRID" id="207665">
    <property type="interactions" value="5"/>
</dbReference>
<dbReference type="FunCoup" id="Q9QXK7">
    <property type="interactions" value="2785"/>
</dbReference>
<dbReference type="STRING" id="10090.ENSMUSP00000068148"/>
<dbReference type="iPTMnet" id="Q9QXK7"/>
<dbReference type="PhosphoSitePlus" id="Q9QXK7"/>
<dbReference type="jPOST" id="Q9QXK7"/>
<dbReference type="PaxDb" id="10090-ENSMUSP00000068148"/>
<dbReference type="PeptideAtlas" id="Q9QXK7"/>
<dbReference type="ProteomicsDB" id="283939"/>
<dbReference type="Pumba" id="Q9QXK7"/>
<dbReference type="Antibodypedia" id="12409">
    <property type="antibodies" value="236 antibodies from 27 providers"/>
</dbReference>
<dbReference type="DNASU" id="54451"/>
<dbReference type="Ensembl" id="ENSMUST00000067284.10">
    <property type="protein sequence ID" value="ENSMUSP00000068148.9"/>
    <property type="gene ID" value="ENSMUSG00000054309.10"/>
</dbReference>
<dbReference type="GeneID" id="54451"/>
<dbReference type="KEGG" id="mmu:54451"/>
<dbReference type="UCSC" id="uc007ndp.2">
    <property type="organism name" value="mouse"/>
</dbReference>
<dbReference type="AGR" id="MGI:1859328"/>
<dbReference type="CTD" id="51692"/>
<dbReference type="MGI" id="MGI:1859328">
    <property type="gene designation" value="Cpsf3"/>
</dbReference>
<dbReference type="VEuPathDB" id="HostDB:ENSMUSG00000054309"/>
<dbReference type="eggNOG" id="KOG1137">
    <property type="taxonomic scope" value="Eukaryota"/>
</dbReference>
<dbReference type="GeneTree" id="ENSGT00940000155699"/>
<dbReference type="HOGENOM" id="CLU_009673_2_3_1"/>
<dbReference type="InParanoid" id="Q9QXK7"/>
<dbReference type="OMA" id="TRSVECE"/>
<dbReference type="OrthoDB" id="10249535at2759"/>
<dbReference type="PhylomeDB" id="Q9QXK7"/>
<dbReference type="TreeFam" id="TF105643"/>
<dbReference type="Reactome" id="R-MMU-159231">
    <property type="pathway name" value="Transport of Mature mRNA Derived from an Intronless Transcript"/>
</dbReference>
<dbReference type="Reactome" id="R-MMU-72187">
    <property type="pathway name" value="mRNA 3'-end processing"/>
</dbReference>
<dbReference type="Reactome" id="R-MMU-72203">
    <property type="pathway name" value="Processing of Capped Intron-Containing Pre-mRNA"/>
</dbReference>
<dbReference type="Reactome" id="R-MMU-73856">
    <property type="pathway name" value="RNA Polymerase II Transcription Termination"/>
</dbReference>
<dbReference type="Reactome" id="R-MMU-77595">
    <property type="pathway name" value="Processing of Intronless Pre-mRNAs"/>
</dbReference>
<dbReference type="BioGRID-ORCS" id="54451">
    <property type="hits" value="29 hits in 82 CRISPR screens"/>
</dbReference>
<dbReference type="ChiTaRS" id="Cpsf3">
    <property type="organism name" value="mouse"/>
</dbReference>
<dbReference type="PRO" id="PR:Q9QXK7"/>
<dbReference type="Proteomes" id="UP000000589">
    <property type="component" value="Chromosome 12"/>
</dbReference>
<dbReference type="RNAct" id="Q9QXK7">
    <property type="molecule type" value="protein"/>
</dbReference>
<dbReference type="Bgee" id="ENSMUSG00000054309">
    <property type="expression patterns" value="Expressed in floor plate of midbrain and 273 other cell types or tissues"/>
</dbReference>
<dbReference type="ExpressionAtlas" id="Q9QXK7">
    <property type="expression patterns" value="baseline and differential"/>
</dbReference>
<dbReference type="GO" id="GO:0005847">
    <property type="term" value="C:mRNA cleavage and polyadenylation specificity factor complex"/>
    <property type="evidence" value="ECO:0000314"/>
    <property type="project" value="MGI"/>
</dbReference>
<dbReference type="GO" id="GO:1990904">
    <property type="term" value="C:ribonucleoprotein complex"/>
    <property type="evidence" value="ECO:0007669"/>
    <property type="project" value="UniProtKB-KW"/>
</dbReference>
<dbReference type="GO" id="GO:0004534">
    <property type="term" value="F:5'-3' RNA exonuclease activity"/>
    <property type="evidence" value="ECO:0000314"/>
    <property type="project" value="UniProtKB"/>
</dbReference>
<dbReference type="GO" id="GO:0046872">
    <property type="term" value="F:metal ion binding"/>
    <property type="evidence" value="ECO:0000250"/>
    <property type="project" value="UniProtKB"/>
</dbReference>
<dbReference type="GO" id="GO:0003723">
    <property type="term" value="F:RNA binding"/>
    <property type="evidence" value="ECO:0000314"/>
    <property type="project" value="UniProtKB"/>
</dbReference>
<dbReference type="GO" id="GO:0004521">
    <property type="term" value="F:RNA endonuclease activity"/>
    <property type="evidence" value="ECO:0000314"/>
    <property type="project" value="UniProtKB"/>
</dbReference>
<dbReference type="GO" id="GO:0180010">
    <property type="term" value="P:co-transcriptional mRNA 3'-end processing, cleavage and polyadenylation pathway"/>
    <property type="evidence" value="ECO:0007669"/>
    <property type="project" value="Ensembl"/>
</dbReference>
<dbReference type="GO" id="GO:0006398">
    <property type="term" value="P:mRNA 3'-end processing by stem-loop binding and cleavage"/>
    <property type="evidence" value="ECO:0000314"/>
    <property type="project" value="UniProtKB"/>
</dbReference>
<dbReference type="GO" id="GO:1900087">
    <property type="term" value="P:positive regulation of G1/S transition of mitotic cell cycle"/>
    <property type="evidence" value="ECO:0000250"/>
    <property type="project" value="UniProtKB"/>
</dbReference>
<dbReference type="CDD" id="cd16292">
    <property type="entry name" value="CPSF3-like_MBL-fold"/>
    <property type="match status" value="1"/>
</dbReference>
<dbReference type="FunFam" id="3.40.50.10890:FF:000001">
    <property type="entry name" value="Cleavage and polyadenylation specificity factor subunit 3"/>
    <property type="match status" value="1"/>
</dbReference>
<dbReference type="FunFam" id="3.60.15.10:FF:000005">
    <property type="entry name" value="Cleavage and polyadenylation specificity factor subunit 3"/>
    <property type="match status" value="1"/>
</dbReference>
<dbReference type="Gene3D" id="3.40.50.10890">
    <property type="match status" value="1"/>
</dbReference>
<dbReference type="Gene3D" id="3.60.15.10">
    <property type="entry name" value="Ribonuclease Z/Hydroxyacylglutathione hydrolase-like"/>
    <property type="match status" value="1"/>
</dbReference>
<dbReference type="InterPro" id="IPR022712">
    <property type="entry name" value="Beta_Casp"/>
</dbReference>
<dbReference type="InterPro" id="IPR021718">
    <property type="entry name" value="CPSF73-100_C"/>
</dbReference>
<dbReference type="InterPro" id="IPR050698">
    <property type="entry name" value="MBL"/>
</dbReference>
<dbReference type="InterPro" id="IPR001279">
    <property type="entry name" value="Metallo-B-lactamas"/>
</dbReference>
<dbReference type="InterPro" id="IPR036866">
    <property type="entry name" value="RibonucZ/Hydroxyglut_hydro"/>
</dbReference>
<dbReference type="InterPro" id="IPR011108">
    <property type="entry name" value="RMMBL"/>
</dbReference>
<dbReference type="PANTHER" id="PTHR11203">
    <property type="entry name" value="CLEAVAGE AND POLYADENYLATION SPECIFICITY FACTOR FAMILY MEMBER"/>
    <property type="match status" value="1"/>
</dbReference>
<dbReference type="PANTHER" id="PTHR11203:SF11">
    <property type="entry name" value="CLEAVAGE AND POLYADENYLATION SPECIFICITY FACTOR SUBUNIT 3"/>
    <property type="match status" value="1"/>
</dbReference>
<dbReference type="Pfam" id="PF10996">
    <property type="entry name" value="Beta-Casp"/>
    <property type="match status" value="1"/>
</dbReference>
<dbReference type="Pfam" id="PF11718">
    <property type="entry name" value="CPSF73-100_C"/>
    <property type="match status" value="1"/>
</dbReference>
<dbReference type="Pfam" id="PF00753">
    <property type="entry name" value="Lactamase_B"/>
    <property type="match status" value="1"/>
</dbReference>
<dbReference type="Pfam" id="PF07521">
    <property type="entry name" value="RMMBL"/>
    <property type="match status" value="1"/>
</dbReference>
<dbReference type="SMART" id="SM01027">
    <property type="entry name" value="Beta-Casp"/>
    <property type="match status" value="1"/>
</dbReference>
<dbReference type="SMART" id="SM01098">
    <property type="entry name" value="CPSF73-100_C"/>
    <property type="match status" value="1"/>
</dbReference>
<dbReference type="SMART" id="SM00849">
    <property type="entry name" value="Lactamase_B"/>
    <property type="match status" value="1"/>
</dbReference>
<dbReference type="SUPFAM" id="SSF56281">
    <property type="entry name" value="Metallo-hydrolase/oxidoreductase"/>
    <property type="match status" value="1"/>
</dbReference>
<sequence>MSAIPAEESDQLLIRPLGAGQEVGRSCIILEFKGRKIMLDCGIHPGLEGMDALPYIDLIDPAEIDLLLISHFHLDHCGALPWFLQKTSFKGRTFMTHATKAIYRWLLSDYVKVSNISADDMLYTETDLEESMDKIETINFHEVKEVAGIKFWCYHAGHVLGAAMFMIEIAGVKLLYTGDFSRQEDRHLMAAEIPNIKPDILIIESTYGTHIHEKREEREARFCNTVHDIVNRGGRGLIPVFALGRAQELLLILDEYWQNHPELHDIPIYYASSLAKKCMAVYQTYVNAMNDKIRKQININNPFVFKHISNLKSMDHFDDIGPSVVMASPGMIQNGLSRELFESWCTDKRNGVIIAGYCVEGTLAKHIMSEPEEITTMSGQKLPLKMSVDYISFSAHTDYQQTSEFIRALKPPHVILVHGEQNEMARLKAALIREYEDNDEVHIEVHNPRNTEAVTLNFRGEKLAKVMGFLADKKPEQGQRVSGILVKRNFNYHILSPCDLSNYTDLAMSTVKQTQAIPYTGPFYLLYYQLQKLTGDVEELEIQEKPALKVFKSITVVQEPGMVVLEWLANPSNDMYADTVTTVILEVQSNPKIRKGAVQKVSKKLEMHVYSKRLEVMLQDIFGEDCVSVKDDSVLSVTVDGKTANINLETRAVECEEGSEDDESLREMVELAAQRLYEALTPVH</sequence>